<feature type="chain" id="PRO_0000228811" description="Rap1 GTPase-GDP dissociation stimulator 1-B">
    <location>
        <begin position="1"/>
        <end position="607"/>
    </location>
</feature>
<feature type="repeat" description="ARM 1" evidence="3">
    <location>
        <begin position="79"/>
        <end position="118"/>
    </location>
</feature>
<feature type="repeat" description="ARM 2" evidence="3">
    <location>
        <begin position="170"/>
        <end position="211"/>
    </location>
</feature>
<feature type="repeat" description="ARM 3" evidence="3">
    <location>
        <begin position="347"/>
        <end position="390"/>
    </location>
</feature>
<feature type="repeat" description="ARM 4" evidence="3">
    <location>
        <begin position="391"/>
        <end position="431"/>
    </location>
</feature>
<feature type="repeat" description="ARM 5" evidence="3">
    <location>
        <begin position="479"/>
        <end position="519"/>
    </location>
</feature>
<keyword id="KW-0963">Cytoplasm</keyword>
<keyword id="KW-0256">Endoplasmic reticulum</keyword>
<keyword id="KW-0343">GTPase activation</keyword>
<keyword id="KW-0496">Mitochondrion</keyword>
<keyword id="KW-1185">Reference proteome</keyword>
<keyword id="KW-0677">Repeat</keyword>
<dbReference type="EMBL" id="BC087423">
    <property type="protein sequence ID" value="AAH87423.1"/>
    <property type="molecule type" value="mRNA"/>
</dbReference>
<dbReference type="SMR" id="Q5PPZ9"/>
<dbReference type="DNASU" id="496030"/>
<dbReference type="GeneID" id="496030"/>
<dbReference type="KEGG" id="xla:496030"/>
<dbReference type="AGR" id="Xenbase:XB-GENE-6252826"/>
<dbReference type="CTD" id="496030"/>
<dbReference type="Xenbase" id="XB-GENE-6252826">
    <property type="gene designation" value="rap1gds1.S"/>
</dbReference>
<dbReference type="OrthoDB" id="26149at2759"/>
<dbReference type="Proteomes" id="UP000186698">
    <property type="component" value="Chromosome 1S"/>
</dbReference>
<dbReference type="Bgee" id="496030">
    <property type="expression patterns" value="Expressed in brain and 20 other cell types or tissues"/>
</dbReference>
<dbReference type="GO" id="GO:0005829">
    <property type="term" value="C:cytosol"/>
    <property type="evidence" value="ECO:0000318"/>
    <property type="project" value="GO_Central"/>
</dbReference>
<dbReference type="GO" id="GO:0005783">
    <property type="term" value="C:endoplasmic reticulum"/>
    <property type="evidence" value="ECO:0007669"/>
    <property type="project" value="UniProtKB-SubCell"/>
</dbReference>
<dbReference type="GO" id="GO:0005739">
    <property type="term" value="C:mitochondrion"/>
    <property type="evidence" value="ECO:0007669"/>
    <property type="project" value="UniProtKB-SubCell"/>
</dbReference>
<dbReference type="GO" id="GO:0005096">
    <property type="term" value="F:GTPase activator activity"/>
    <property type="evidence" value="ECO:0007669"/>
    <property type="project" value="UniProtKB-KW"/>
</dbReference>
<dbReference type="GO" id="GO:0005085">
    <property type="term" value="F:guanyl-nucleotide exchange factor activity"/>
    <property type="evidence" value="ECO:0007669"/>
    <property type="project" value="InterPro"/>
</dbReference>
<dbReference type="GO" id="GO:0031267">
    <property type="term" value="F:small GTPase binding"/>
    <property type="evidence" value="ECO:0000250"/>
    <property type="project" value="UniProtKB"/>
</dbReference>
<dbReference type="GO" id="GO:0043547">
    <property type="term" value="P:positive regulation of GTPase activity"/>
    <property type="evidence" value="ECO:0000250"/>
    <property type="project" value="UniProtKB"/>
</dbReference>
<dbReference type="GO" id="GO:0007264">
    <property type="term" value="P:small GTPase-mediated signal transduction"/>
    <property type="evidence" value="ECO:0000250"/>
    <property type="project" value="UniProtKB"/>
</dbReference>
<dbReference type="FunFam" id="1.25.10.10:FF:000127">
    <property type="entry name" value="rap1 GTPase-GDP dissociation stimulator 1 isoform X1"/>
    <property type="match status" value="1"/>
</dbReference>
<dbReference type="FunFam" id="1.25.10.10:FF:000141">
    <property type="entry name" value="rap1 GTPase-GDP dissociation stimulator 1 isoform X1"/>
    <property type="match status" value="1"/>
</dbReference>
<dbReference type="FunFam" id="1.25.10.10:FF:000144">
    <property type="entry name" value="rap1 GTPase-GDP dissociation stimulator 1 isoform X1"/>
    <property type="match status" value="1"/>
</dbReference>
<dbReference type="Gene3D" id="1.25.10.10">
    <property type="entry name" value="Leucine-rich Repeat Variant"/>
    <property type="match status" value="3"/>
</dbReference>
<dbReference type="InterPro" id="IPR011989">
    <property type="entry name" value="ARM-like"/>
</dbReference>
<dbReference type="InterPro" id="IPR016024">
    <property type="entry name" value="ARM-type_fold"/>
</dbReference>
<dbReference type="InterPro" id="IPR000225">
    <property type="entry name" value="Armadillo"/>
</dbReference>
<dbReference type="InterPro" id="IPR040144">
    <property type="entry name" value="RAP1GDS1"/>
</dbReference>
<dbReference type="PANTHER" id="PTHR10957">
    <property type="entry name" value="RAP1 GTPASE-GDP DISSOCIATION STIMULATOR 1"/>
    <property type="match status" value="1"/>
</dbReference>
<dbReference type="Pfam" id="PF00514">
    <property type="entry name" value="Arm"/>
    <property type="match status" value="4"/>
</dbReference>
<dbReference type="SMART" id="SM00185">
    <property type="entry name" value="ARM"/>
    <property type="match status" value="5"/>
</dbReference>
<dbReference type="SUPFAM" id="SSF48371">
    <property type="entry name" value="ARM repeat"/>
    <property type="match status" value="2"/>
</dbReference>
<dbReference type="PROSITE" id="PS50176">
    <property type="entry name" value="ARM_REPEAT"/>
    <property type="match status" value="1"/>
</dbReference>
<sequence length="607" mass="66648">MDNLNDALEKLKLTGTECTSDKLDGCLDCLLQALGHNNTESSEKIQQSGILQLFASILNSQSSCASKVAHIVAEIAKNELMRIPCVEADLIPPLVQLLHSKDQEVLLQTGRALGNICYDNHEGRRTVDQEGGAQIVVDHLRSRCTLTDPSSEKLMTVFCGMLMNYSSENDSLQTQLIQMGVIPILVDLLAVHSQNTALTEMCLVAFGNLAELESSKEQFAATNVAEVIVKLFKKQTEHEKREVIFEVLAPLAENDAIKMQLVEAGLVECLLDIVQQTVNSEKDDDVAELKTSSDLMVLLLLGDESMQKLFEGGKGSVFQRVLSWLPSNNHQLQLAGALAIANFARNDGNCIHMVDSEIVQKLLDLLDRHVEDGNVTVQHAALSALRNLAIPVVNKAKMLSAGVTEEVLKFLPSEMPPVQFKLLGTLRMLIDAQAEAAEQLGKNEKLVERLVEWCEAKDHAGVMGESNRLLSALIRHSKSKDVIRTTVQSGGIKHLVTMATSEHVIMQNEALVALGLIAALELQAAERDLESAKLVEVLHRLLSDERSAPEIKYNSMVLICAVMGSEPLHKEVQKLAFLDVVSKLRSHENKTVAQQASLTEQKFTVQS</sequence>
<gene>
    <name type="primary">rap1gds1-b</name>
</gene>
<organism>
    <name type="scientific">Xenopus laevis</name>
    <name type="common">African clawed frog</name>
    <dbReference type="NCBI Taxonomy" id="8355"/>
    <lineage>
        <taxon>Eukaryota</taxon>
        <taxon>Metazoa</taxon>
        <taxon>Chordata</taxon>
        <taxon>Craniata</taxon>
        <taxon>Vertebrata</taxon>
        <taxon>Euteleostomi</taxon>
        <taxon>Amphibia</taxon>
        <taxon>Batrachia</taxon>
        <taxon>Anura</taxon>
        <taxon>Pipoidea</taxon>
        <taxon>Pipidae</taxon>
        <taxon>Xenopodinae</taxon>
        <taxon>Xenopus</taxon>
        <taxon>Xenopus</taxon>
    </lineage>
</organism>
<name>GDS1B_XENLA</name>
<reference evidence="4" key="1">
    <citation type="submission" date="2004-12" db="EMBL/GenBank/DDBJ databases">
        <authorList>
            <consortium name="NIH - Xenopus Gene Collection (XGC) project"/>
        </authorList>
    </citation>
    <scope>NUCLEOTIDE SEQUENCE [LARGE SCALE MRNA]</scope>
    <source>
        <tissue evidence="4">Testis</tissue>
    </source>
</reference>
<evidence type="ECO:0000250" key="1">
    <source>
        <dbReference type="UniProtKB" id="O93614"/>
    </source>
</evidence>
<evidence type="ECO:0000250" key="2">
    <source>
        <dbReference type="UniProtKB" id="P52306"/>
    </source>
</evidence>
<evidence type="ECO:0000255" key="3"/>
<evidence type="ECO:0000312" key="4">
    <source>
        <dbReference type="EMBL" id="AAH87423.1"/>
    </source>
</evidence>
<comment type="function">
    <text evidence="2">Stimulates GDP/GTP exchange reaction of a group of small GTP-binding proteins (G proteins) including Rap1a/Rap1b, RhoA, RhoB and KRas, by stimulating the dissociation of GDP from and the subsequent binding of GTP to each small G protein.</text>
</comment>
<comment type="subunit">
    <text evidence="1">Interacts with ralB. Probably interacts with the post-translationally isoprenylated (geranyl-geranylation) forms of ral proteins. Interacts with both GDP-bound and GTP-bound forms of ralA, but interaction is much stronger with ralA-GDP (By similarity).</text>
</comment>
<comment type="subcellular location">
    <subcellularLocation>
        <location evidence="2">Cytoplasm</location>
        <location evidence="2">Cytosol</location>
    </subcellularLocation>
    <subcellularLocation>
        <location evidence="2">Endoplasmic reticulum</location>
    </subcellularLocation>
    <subcellularLocation>
        <location evidence="2">Mitochondrion</location>
    </subcellularLocation>
</comment>
<proteinExistence type="evidence at transcript level"/>
<protein>
    <recommendedName>
        <fullName>Rap1 GTPase-GDP dissociation stimulator 1-B</fullName>
        <shortName>Rap1gds1-B protein</shortName>
    </recommendedName>
    <alternativeName>
        <fullName>RalB-binding protein B</fullName>
    </alternativeName>
    <alternativeName>
        <fullName>XsmgGDS-B</fullName>
        <shortName>smgGDS-B</shortName>
    </alternativeName>
</protein>
<accession>Q5PPZ9</accession>